<reference key="1">
    <citation type="journal article" date="2007" name="J. Bacteriol.">
        <title>The genome sequence of avian pathogenic Escherichia coli strain O1:K1:H7 shares strong similarities with human extraintestinal pathogenic E. coli genomes.</title>
        <authorList>
            <person name="Johnson T.J."/>
            <person name="Kariyawasam S."/>
            <person name="Wannemuehler Y."/>
            <person name="Mangiamele P."/>
            <person name="Johnson S.J."/>
            <person name="Doetkott C."/>
            <person name="Skyberg J.A."/>
            <person name="Lynne A.M."/>
            <person name="Johnson J.R."/>
            <person name="Nolan L.K."/>
        </authorList>
    </citation>
    <scope>NUCLEOTIDE SEQUENCE [LARGE SCALE GENOMIC DNA]</scope>
</reference>
<sequence>MSYYAFEGLIPVVHPTAFVHPSAVLIGDVIVGAGVYIGPLASLRGDYGRLIVQAGANIQDGCIMHGYCDTDTIVGENGHIGHGAILHGCVIGRDALVGMNSVIMDGAVIGEESIVAAMSFVKAGFRGEKRQLLMGTPARAVRSVSDDELHWKRLNTKEYQDLVGRCHAALHETQPLRQMEENRPRLQGTTDVTPKR</sequence>
<comment type="function">
    <text evidence="1">Overproduction of CaiE stimulates the activity of CaiB and CaiD.</text>
</comment>
<comment type="pathway">
    <text evidence="1">Amine and polyamine metabolism; carnitine metabolism.</text>
</comment>
<comment type="similarity">
    <text evidence="1">Belongs to the transferase hexapeptide repeat family.</text>
</comment>
<comment type="sequence caution" evidence="3">
    <conflict type="erroneous initiation">
        <sequence resource="EMBL-CDS" id="ABI99524"/>
    </conflict>
</comment>
<dbReference type="EMBL" id="CP000468">
    <property type="protein sequence ID" value="ABI99524.1"/>
    <property type="status" value="ALT_INIT"/>
    <property type="molecule type" value="Genomic_DNA"/>
</dbReference>
<dbReference type="RefSeq" id="WP_000122880.1">
    <property type="nucleotide sequence ID" value="NZ_CADILS010000013.1"/>
</dbReference>
<dbReference type="SMR" id="A1A785"/>
<dbReference type="KEGG" id="ecv:APECO1_1946"/>
<dbReference type="HOGENOM" id="CLU_064827_4_2_6"/>
<dbReference type="UniPathway" id="UPA00117"/>
<dbReference type="Proteomes" id="UP000008216">
    <property type="component" value="Chromosome"/>
</dbReference>
<dbReference type="GO" id="GO:0016740">
    <property type="term" value="F:transferase activity"/>
    <property type="evidence" value="ECO:0007669"/>
    <property type="project" value="UniProtKB-KW"/>
</dbReference>
<dbReference type="GO" id="GO:0009437">
    <property type="term" value="P:carnitine metabolic process"/>
    <property type="evidence" value="ECO:0007669"/>
    <property type="project" value="UniProtKB-UniRule"/>
</dbReference>
<dbReference type="CDD" id="cd04745">
    <property type="entry name" value="LbH_paaY_like"/>
    <property type="match status" value="1"/>
</dbReference>
<dbReference type="FunFam" id="2.160.10.10:FF:000012">
    <property type="entry name" value="Carnitine operon protein CaiE"/>
    <property type="match status" value="1"/>
</dbReference>
<dbReference type="Gene3D" id="2.160.10.10">
    <property type="entry name" value="Hexapeptide repeat proteins"/>
    <property type="match status" value="1"/>
</dbReference>
<dbReference type="HAMAP" id="MF_01525">
    <property type="entry name" value="CaiE"/>
    <property type="match status" value="1"/>
</dbReference>
<dbReference type="InterPro" id="IPR023446">
    <property type="entry name" value="CaiE"/>
</dbReference>
<dbReference type="InterPro" id="IPR001451">
    <property type="entry name" value="Hexapep"/>
</dbReference>
<dbReference type="InterPro" id="IPR050484">
    <property type="entry name" value="Transf_Hexapept/Carb_Anhydrase"/>
</dbReference>
<dbReference type="InterPro" id="IPR011004">
    <property type="entry name" value="Trimer_LpxA-like_sf"/>
</dbReference>
<dbReference type="NCBIfam" id="NF010150">
    <property type="entry name" value="PRK13627.1"/>
    <property type="match status" value="1"/>
</dbReference>
<dbReference type="PANTHER" id="PTHR13061">
    <property type="entry name" value="DYNACTIN SUBUNIT P25"/>
    <property type="match status" value="1"/>
</dbReference>
<dbReference type="PANTHER" id="PTHR13061:SF29">
    <property type="entry name" value="GAMMA CARBONIC ANHYDRASE-LIKE 1, MITOCHONDRIAL-RELATED"/>
    <property type="match status" value="1"/>
</dbReference>
<dbReference type="Pfam" id="PF00132">
    <property type="entry name" value="Hexapep"/>
    <property type="match status" value="1"/>
</dbReference>
<dbReference type="SUPFAM" id="SSF51161">
    <property type="entry name" value="Trimeric LpxA-like enzymes"/>
    <property type="match status" value="1"/>
</dbReference>
<organism>
    <name type="scientific">Escherichia coli O1:K1 / APEC</name>
    <dbReference type="NCBI Taxonomy" id="405955"/>
    <lineage>
        <taxon>Bacteria</taxon>
        <taxon>Pseudomonadati</taxon>
        <taxon>Pseudomonadota</taxon>
        <taxon>Gammaproteobacteria</taxon>
        <taxon>Enterobacterales</taxon>
        <taxon>Enterobacteriaceae</taxon>
        <taxon>Escherichia</taxon>
    </lineage>
</organism>
<evidence type="ECO:0000255" key="1">
    <source>
        <dbReference type="HAMAP-Rule" id="MF_01525"/>
    </source>
</evidence>
<evidence type="ECO:0000256" key="2">
    <source>
        <dbReference type="SAM" id="MobiDB-lite"/>
    </source>
</evidence>
<evidence type="ECO:0000305" key="3"/>
<gene>
    <name evidence="1" type="primary">caiE</name>
    <name type="ordered locus">Ecok1_00310</name>
    <name type="ORF">APECO1_1946</name>
</gene>
<name>CAIE_ECOK1</name>
<keyword id="KW-1185">Reference proteome</keyword>
<keyword id="KW-0677">Repeat</keyword>
<keyword id="KW-0808">Transferase</keyword>
<accession>A1A785</accession>
<proteinExistence type="inferred from homology"/>
<feature type="chain" id="PRO_0000292724" description="Carnitine operon protein CaiE">
    <location>
        <begin position="1"/>
        <end position="196"/>
    </location>
</feature>
<feature type="region of interest" description="Disordered" evidence="2">
    <location>
        <begin position="173"/>
        <end position="196"/>
    </location>
</feature>
<feature type="compositionally biased region" description="Polar residues" evidence="2">
    <location>
        <begin position="187"/>
        <end position="196"/>
    </location>
</feature>
<protein>
    <recommendedName>
        <fullName evidence="1">Carnitine operon protein CaiE</fullName>
    </recommendedName>
</protein>